<organism>
    <name type="scientific">Latilactobacillus sakei subsp. sakei (strain 23K)</name>
    <name type="common">Lactobacillus sakei subsp. sakei</name>
    <dbReference type="NCBI Taxonomy" id="314315"/>
    <lineage>
        <taxon>Bacteria</taxon>
        <taxon>Bacillati</taxon>
        <taxon>Bacillota</taxon>
        <taxon>Bacilli</taxon>
        <taxon>Lactobacillales</taxon>
        <taxon>Lactobacillaceae</taxon>
        <taxon>Latilactobacillus</taxon>
    </lineage>
</organism>
<proteinExistence type="inferred from homology"/>
<protein>
    <recommendedName>
        <fullName evidence="1">tRNA (guanine-N(1)-)-methyltransferase</fullName>
        <ecNumber evidence="1">2.1.1.228</ecNumber>
    </recommendedName>
    <alternativeName>
        <fullName evidence="1">M1G-methyltransferase</fullName>
    </alternativeName>
    <alternativeName>
        <fullName evidence="1">tRNA [GM37] methyltransferase</fullName>
    </alternativeName>
</protein>
<name>TRMD_LATSS</name>
<gene>
    <name evidence="1" type="primary">trmD</name>
    <name type="ordered locus">LCA_0718</name>
</gene>
<evidence type="ECO:0000255" key="1">
    <source>
        <dbReference type="HAMAP-Rule" id="MF_00605"/>
    </source>
</evidence>
<dbReference type="EC" id="2.1.1.228" evidence="1"/>
<dbReference type="EMBL" id="CR936503">
    <property type="protein sequence ID" value="CAI55022.1"/>
    <property type="molecule type" value="Genomic_DNA"/>
</dbReference>
<dbReference type="RefSeq" id="WP_011374426.1">
    <property type="nucleotide sequence ID" value="NC_007576.1"/>
</dbReference>
<dbReference type="SMR" id="Q38XQ7"/>
<dbReference type="STRING" id="314315.LCA_0718"/>
<dbReference type="KEGG" id="lsa:LCA_0718"/>
<dbReference type="eggNOG" id="COG0336">
    <property type="taxonomic scope" value="Bacteria"/>
</dbReference>
<dbReference type="HOGENOM" id="CLU_047363_0_1_9"/>
<dbReference type="OrthoDB" id="9807416at2"/>
<dbReference type="Proteomes" id="UP000002707">
    <property type="component" value="Chromosome"/>
</dbReference>
<dbReference type="GO" id="GO:0005829">
    <property type="term" value="C:cytosol"/>
    <property type="evidence" value="ECO:0007669"/>
    <property type="project" value="TreeGrafter"/>
</dbReference>
<dbReference type="GO" id="GO:0052906">
    <property type="term" value="F:tRNA (guanine(37)-N1)-methyltransferase activity"/>
    <property type="evidence" value="ECO:0007669"/>
    <property type="project" value="UniProtKB-UniRule"/>
</dbReference>
<dbReference type="GO" id="GO:0002939">
    <property type="term" value="P:tRNA N1-guanine methylation"/>
    <property type="evidence" value="ECO:0007669"/>
    <property type="project" value="TreeGrafter"/>
</dbReference>
<dbReference type="CDD" id="cd18080">
    <property type="entry name" value="TrmD-like"/>
    <property type="match status" value="1"/>
</dbReference>
<dbReference type="FunFam" id="1.10.1270.20:FF:000001">
    <property type="entry name" value="tRNA (guanine-N(1)-)-methyltransferase"/>
    <property type="match status" value="1"/>
</dbReference>
<dbReference type="FunFam" id="3.40.1280.10:FF:000001">
    <property type="entry name" value="tRNA (guanine-N(1)-)-methyltransferase"/>
    <property type="match status" value="1"/>
</dbReference>
<dbReference type="Gene3D" id="3.40.1280.10">
    <property type="match status" value="1"/>
</dbReference>
<dbReference type="Gene3D" id="1.10.1270.20">
    <property type="entry name" value="tRNA(m1g37)methyltransferase, domain 2"/>
    <property type="match status" value="1"/>
</dbReference>
<dbReference type="HAMAP" id="MF_00605">
    <property type="entry name" value="TrmD"/>
    <property type="match status" value="1"/>
</dbReference>
<dbReference type="InterPro" id="IPR029028">
    <property type="entry name" value="Alpha/beta_knot_MTases"/>
</dbReference>
<dbReference type="InterPro" id="IPR023148">
    <property type="entry name" value="tRNA_m1G_MeTrfase_C_sf"/>
</dbReference>
<dbReference type="InterPro" id="IPR002649">
    <property type="entry name" value="tRNA_m1G_MeTrfase_TrmD"/>
</dbReference>
<dbReference type="InterPro" id="IPR029026">
    <property type="entry name" value="tRNA_m1G_MTases_N"/>
</dbReference>
<dbReference type="InterPro" id="IPR016009">
    <property type="entry name" value="tRNA_MeTrfase_TRMD/TRM10"/>
</dbReference>
<dbReference type="NCBIfam" id="NF000648">
    <property type="entry name" value="PRK00026.1"/>
    <property type="match status" value="1"/>
</dbReference>
<dbReference type="NCBIfam" id="TIGR00088">
    <property type="entry name" value="trmD"/>
    <property type="match status" value="1"/>
</dbReference>
<dbReference type="PANTHER" id="PTHR46417">
    <property type="entry name" value="TRNA (GUANINE-N(1)-)-METHYLTRANSFERASE"/>
    <property type="match status" value="1"/>
</dbReference>
<dbReference type="PANTHER" id="PTHR46417:SF1">
    <property type="entry name" value="TRNA (GUANINE-N(1)-)-METHYLTRANSFERASE"/>
    <property type="match status" value="1"/>
</dbReference>
<dbReference type="Pfam" id="PF01746">
    <property type="entry name" value="tRNA_m1G_MT"/>
    <property type="match status" value="1"/>
</dbReference>
<dbReference type="PIRSF" id="PIRSF000386">
    <property type="entry name" value="tRNA_mtase"/>
    <property type="match status" value="1"/>
</dbReference>
<dbReference type="SUPFAM" id="SSF75217">
    <property type="entry name" value="alpha/beta knot"/>
    <property type="match status" value="1"/>
</dbReference>
<reference key="1">
    <citation type="journal article" date="2005" name="Nat. Biotechnol.">
        <title>The complete genome sequence of the meat-borne lactic acid bacterium Lactobacillus sakei 23K.</title>
        <authorList>
            <person name="Chaillou S."/>
            <person name="Champomier-Verges M.-C."/>
            <person name="Cornet M."/>
            <person name="Crutz-Le Coq A.-M."/>
            <person name="Dudez A.-M."/>
            <person name="Martin V."/>
            <person name="Beaufils S."/>
            <person name="Darbon-Rongere E."/>
            <person name="Bossy R."/>
            <person name="Loux V."/>
            <person name="Zagorec M."/>
        </authorList>
    </citation>
    <scope>NUCLEOTIDE SEQUENCE [LARGE SCALE GENOMIC DNA]</scope>
    <source>
        <strain>23K</strain>
    </source>
</reference>
<comment type="function">
    <text evidence="1">Specifically methylates guanosine-37 in various tRNAs.</text>
</comment>
<comment type="catalytic activity">
    <reaction evidence="1">
        <text>guanosine(37) in tRNA + S-adenosyl-L-methionine = N(1)-methylguanosine(37) in tRNA + S-adenosyl-L-homocysteine + H(+)</text>
        <dbReference type="Rhea" id="RHEA:36899"/>
        <dbReference type="Rhea" id="RHEA-COMP:10145"/>
        <dbReference type="Rhea" id="RHEA-COMP:10147"/>
        <dbReference type="ChEBI" id="CHEBI:15378"/>
        <dbReference type="ChEBI" id="CHEBI:57856"/>
        <dbReference type="ChEBI" id="CHEBI:59789"/>
        <dbReference type="ChEBI" id="CHEBI:73542"/>
        <dbReference type="ChEBI" id="CHEBI:74269"/>
        <dbReference type="EC" id="2.1.1.228"/>
    </reaction>
</comment>
<comment type="subunit">
    <text evidence="1">Homodimer.</text>
</comment>
<comment type="subcellular location">
    <subcellularLocation>
        <location evidence="1">Cytoplasm</location>
    </subcellularLocation>
</comment>
<comment type="similarity">
    <text evidence="1">Belongs to the RNA methyltransferase TrmD family.</text>
</comment>
<feature type="chain" id="PRO_0000257427" description="tRNA (guanine-N(1)-)-methyltransferase">
    <location>
        <begin position="1"/>
        <end position="246"/>
    </location>
</feature>
<feature type="binding site" evidence="1">
    <location>
        <position position="113"/>
    </location>
    <ligand>
        <name>S-adenosyl-L-methionine</name>
        <dbReference type="ChEBI" id="CHEBI:59789"/>
    </ligand>
</feature>
<feature type="binding site" evidence="1">
    <location>
        <begin position="132"/>
        <end position="137"/>
    </location>
    <ligand>
        <name>S-adenosyl-L-methionine</name>
        <dbReference type="ChEBI" id="CHEBI:59789"/>
    </ligand>
</feature>
<accession>Q38XQ7</accession>
<sequence length="246" mass="27730">MKIDVLSLFPDMVQNGLSQSIIGKAIDRDLIDLEVTDFRDFSVNKHNSVDDAPYGGGAGMLLRPQPIFEAMDQVNAKNPGHKRVILLDPAGVTFNQKVAEEFAQEDHLVFICGHYEGYDERIRTLVTDEVSLGDFVVTGGELGAMVMIDAISRLVPGVLGNEQSAVTDSFSTGLLEHPQYTRPPEYRGLKVPEVLMNGNHKLINEWRDKMSLKRTYERRPDLLENFDLTADQQKWLREIKQETAEK</sequence>
<keyword id="KW-0963">Cytoplasm</keyword>
<keyword id="KW-0489">Methyltransferase</keyword>
<keyword id="KW-1185">Reference proteome</keyword>
<keyword id="KW-0949">S-adenosyl-L-methionine</keyword>
<keyword id="KW-0808">Transferase</keyword>
<keyword id="KW-0819">tRNA processing</keyword>